<gene>
    <name evidence="3" type="primary">AknT</name>
</gene>
<name>AKNT_STRGJ</name>
<sequence>MQTQNAPETAENQQTDSELGRHLLTARGFHWIYGTSGDPYALTLRAESDDPALLTRRIREAGTPLWQSTTGAWVTGRHGVAAEALADPRLALRHADLPGPQRHVFSDAWSNPQLCHIIPLDRAFLHASDADHTRWARSASAVLGSAGGAPAEGVREHAGRVHREAADRTGDSFDLMADYSRPVATEAAAELLGVPAAQRERFAATCLALGVALDAALCPQPLAVTRRLTEAVEDVRALVGDLVEARRTQPGDDLLSAVLHAGSSAASAGQDALAVGVLTAVVGVEVTAGLINNTLESLLTRPVQWARLGENPELAAGAVEEALRFAPPVRLESRIAAEDLTLGGQDLPAGAQVVVHVGAANRDPEAFLAPDHFDLDRPAGQGQLSLSGPHTALFGAFARLQAETAVRTLRERRPVLAPAGAVLRRMRSPVLGAVLRFPLTTSA</sequence>
<evidence type="ECO:0000269" key="1">
    <source>
    </source>
</evidence>
<evidence type="ECO:0000269" key="2">
    <source>
    </source>
</evidence>
<evidence type="ECO:0000303" key="3">
    <source>
    </source>
</evidence>
<evidence type="ECO:0000305" key="4"/>
<dbReference type="EMBL" id="AF264025">
    <property type="protein sequence ID" value="AAF73456.1"/>
    <property type="molecule type" value="Genomic_DNA"/>
</dbReference>
<dbReference type="SMR" id="Q9L4U5"/>
<dbReference type="KEGG" id="ag:AAF73456"/>
<dbReference type="SABIO-RK" id="Q9L4U5"/>
<dbReference type="GO" id="GO:0004497">
    <property type="term" value="F:monooxygenase activity"/>
    <property type="evidence" value="ECO:0007669"/>
    <property type="project" value="InterPro"/>
</dbReference>
<dbReference type="GO" id="GO:0016705">
    <property type="term" value="F:oxidoreductase activity, acting on paired donors, with incorporation or reduction of molecular oxygen"/>
    <property type="evidence" value="ECO:0007669"/>
    <property type="project" value="InterPro"/>
</dbReference>
<dbReference type="GO" id="GO:0017000">
    <property type="term" value="P:antibiotic biosynthetic process"/>
    <property type="evidence" value="ECO:0007669"/>
    <property type="project" value="UniProtKB-KW"/>
</dbReference>
<dbReference type="CDD" id="cd11036">
    <property type="entry name" value="AknT-like"/>
    <property type="match status" value="1"/>
</dbReference>
<dbReference type="Gene3D" id="1.10.630.10">
    <property type="entry name" value="Cytochrome P450"/>
    <property type="match status" value="1"/>
</dbReference>
<dbReference type="InterPro" id="IPR001128">
    <property type="entry name" value="Cyt_P450"/>
</dbReference>
<dbReference type="InterPro" id="IPR002397">
    <property type="entry name" value="Cyt_P450_B"/>
</dbReference>
<dbReference type="InterPro" id="IPR036396">
    <property type="entry name" value="Cyt_P450_sf"/>
</dbReference>
<dbReference type="InterPro" id="IPR030958">
    <property type="entry name" value="P450-rel_GT_act"/>
</dbReference>
<dbReference type="NCBIfam" id="TIGR04515">
    <property type="entry name" value="P450_rel_GT_act"/>
    <property type="match status" value="1"/>
</dbReference>
<dbReference type="PANTHER" id="PTHR46696">
    <property type="entry name" value="P450, PUTATIVE (EUROFUNG)-RELATED"/>
    <property type="match status" value="1"/>
</dbReference>
<dbReference type="PANTHER" id="PTHR46696:SF6">
    <property type="entry name" value="P450, PUTATIVE (EUROFUNG)-RELATED"/>
    <property type="match status" value="1"/>
</dbReference>
<dbReference type="Pfam" id="PF00067">
    <property type="entry name" value="p450"/>
    <property type="match status" value="1"/>
</dbReference>
<dbReference type="PRINTS" id="PR00359">
    <property type="entry name" value="BP450"/>
</dbReference>
<dbReference type="SUPFAM" id="SSF48264">
    <property type="entry name" value="Cytochrome P450"/>
    <property type="match status" value="1"/>
</dbReference>
<feature type="chain" id="PRO_0000430687" description="Protein AknT">
    <location>
        <begin position="1"/>
        <end position="443"/>
    </location>
</feature>
<comment type="function">
    <text evidence="1 2">Involved in the biosynthesis of the anthracycline antitumor agent aclacinomycin A. AknT is required for the glycosylation of aklavinone aglycone by AknS to yield aclacinomycin T (rhodosaminyl-aklavinone).</text>
</comment>
<comment type="similarity">
    <text evidence="4">Belongs to the cytochrome P450 family.</text>
</comment>
<comment type="caution">
    <text evidence="4">Although AknT shows significant similarity to cytochrome P450 family, it lacks the heme-binding sites. The conservation of amino acid sequence is confined primarily to the C-terminal half of the protein.</text>
</comment>
<reference key="1">
    <citation type="journal article" date="2000" name="Mol. Gen. Genet.">
        <title>A gene cluster from Streptomyces galilaeus involved in glycosylation of aclarubicin.</title>
        <authorList>
            <person name="Raty K."/>
            <person name="Kunnari T."/>
            <person name="Hakala J."/>
            <person name="Mantsala P."/>
            <person name="Ylihonko K."/>
        </authorList>
    </citation>
    <scope>NUCLEOTIDE SEQUENCE [GENOMIC DNA]</scope>
    <source>
        <strain>ATCC 31615</strain>
    </source>
</reference>
<reference key="2">
    <citation type="journal article" date="2005" name="Chem. Biol.">
        <title>AknT is an activating protein for the glycosyltransferase AknS in L-aminodeoxysugar transfer to the aglycone of aclacinomycin A.</title>
        <authorList>
            <person name="Lu W."/>
            <person name="Leimkuhler C."/>
            <person name="Gatto G.J. Jr."/>
            <person name="Kruger R.G."/>
            <person name="Oberthuer M."/>
            <person name="Kahne D."/>
            <person name="Walsh C.T."/>
        </authorList>
    </citation>
    <scope>FUNCTION</scope>
    <source>
        <strain>ATCC 31615</strain>
    </source>
</reference>
<reference key="3">
    <citation type="journal article" date="2007" name="J. Am. Chem. Soc.">
        <title>Characterization of rhodosaminyl transfer by the AknS/AknT glycosylation complex and its use in reconstituting the biosynthetic pathway of aclacinomycin A.</title>
        <authorList>
            <person name="Leimkuhler C."/>
            <person name="Fridman M."/>
            <person name="Lupoli T."/>
            <person name="Walker S."/>
            <person name="Walsh C.T."/>
            <person name="Kahne D."/>
        </authorList>
    </citation>
    <scope>FUNCTION</scope>
    <source>
        <strain>ATCC 31615</strain>
    </source>
</reference>
<protein>
    <recommendedName>
        <fullName evidence="3">Protein AknT</fullName>
    </recommendedName>
</protein>
<accession>Q9L4U5</accession>
<organism>
    <name type="scientific">Streptomyces galilaeus</name>
    <dbReference type="NCBI Taxonomy" id="33899"/>
    <lineage>
        <taxon>Bacteria</taxon>
        <taxon>Bacillati</taxon>
        <taxon>Actinomycetota</taxon>
        <taxon>Actinomycetes</taxon>
        <taxon>Kitasatosporales</taxon>
        <taxon>Streptomycetaceae</taxon>
        <taxon>Streptomyces</taxon>
    </lineage>
</organism>
<proteinExistence type="inferred from homology"/>
<keyword id="KW-0045">Antibiotic biosynthesis</keyword>